<proteinExistence type="inferred from homology"/>
<dbReference type="EC" id="5.6.2.1" evidence="1"/>
<dbReference type="EMBL" id="BA000003">
    <property type="protein sequence ID" value="BAB12994.1"/>
    <property type="molecule type" value="Genomic_DNA"/>
</dbReference>
<dbReference type="RefSeq" id="NP_240108.1">
    <property type="nucleotide sequence ID" value="NC_002528.1"/>
</dbReference>
<dbReference type="RefSeq" id="WP_010896046.1">
    <property type="nucleotide sequence ID" value="NC_002528.1"/>
</dbReference>
<dbReference type="SMR" id="P57371"/>
<dbReference type="STRING" id="563178.BUAP5A_279"/>
<dbReference type="EnsemblBacteria" id="BAB12994">
    <property type="protein sequence ID" value="BAB12994"/>
    <property type="gene ID" value="BAB12994"/>
</dbReference>
<dbReference type="KEGG" id="buc:BU284"/>
<dbReference type="PATRIC" id="fig|107806.10.peg.294"/>
<dbReference type="eggNOG" id="COG0550">
    <property type="taxonomic scope" value="Bacteria"/>
</dbReference>
<dbReference type="eggNOG" id="COG0551">
    <property type="taxonomic scope" value="Bacteria"/>
</dbReference>
<dbReference type="HOGENOM" id="CLU_002929_4_3_6"/>
<dbReference type="Proteomes" id="UP000001806">
    <property type="component" value="Chromosome"/>
</dbReference>
<dbReference type="GO" id="GO:0003677">
    <property type="term" value="F:DNA binding"/>
    <property type="evidence" value="ECO:0007669"/>
    <property type="project" value="UniProtKB-KW"/>
</dbReference>
<dbReference type="GO" id="GO:0003917">
    <property type="term" value="F:DNA topoisomerase type I (single strand cut, ATP-independent) activity"/>
    <property type="evidence" value="ECO:0007669"/>
    <property type="project" value="UniProtKB-UniRule"/>
</dbReference>
<dbReference type="GO" id="GO:0008270">
    <property type="term" value="F:zinc ion binding"/>
    <property type="evidence" value="ECO:0007669"/>
    <property type="project" value="UniProtKB-KW"/>
</dbReference>
<dbReference type="GO" id="GO:0006265">
    <property type="term" value="P:DNA topological change"/>
    <property type="evidence" value="ECO:0007669"/>
    <property type="project" value="UniProtKB-UniRule"/>
</dbReference>
<dbReference type="CDD" id="cd00186">
    <property type="entry name" value="TOP1Ac"/>
    <property type="match status" value="1"/>
</dbReference>
<dbReference type="CDD" id="cd03363">
    <property type="entry name" value="TOPRIM_TopoIA_TopoI"/>
    <property type="match status" value="1"/>
</dbReference>
<dbReference type="FunFam" id="3.40.50.140:FF:000001">
    <property type="entry name" value="DNA topoisomerase 1"/>
    <property type="match status" value="1"/>
</dbReference>
<dbReference type="Gene3D" id="2.20.25.10">
    <property type="match status" value="1"/>
</dbReference>
<dbReference type="Gene3D" id="3.40.50.140">
    <property type="match status" value="1"/>
</dbReference>
<dbReference type="Gene3D" id="3.30.65.10">
    <property type="entry name" value="Bacterial Topoisomerase I, domain 1"/>
    <property type="match status" value="3"/>
</dbReference>
<dbReference type="Gene3D" id="1.10.460.10">
    <property type="entry name" value="Topoisomerase I, domain 2"/>
    <property type="match status" value="1"/>
</dbReference>
<dbReference type="Gene3D" id="2.70.20.10">
    <property type="entry name" value="Topoisomerase I, domain 3"/>
    <property type="match status" value="1"/>
</dbReference>
<dbReference type="Gene3D" id="1.10.290.10">
    <property type="entry name" value="Topoisomerase I, domain 4"/>
    <property type="match status" value="1"/>
</dbReference>
<dbReference type="HAMAP" id="MF_00952">
    <property type="entry name" value="Topoisom_1_prok"/>
    <property type="match status" value="1"/>
</dbReference>
<dbReference type="InterPro" id="IPR049330">
    <property type="entry name" value="TOP1_Znf"/>
</dbReference>
<dbReference type="InterPro" id="IPR000380">
    <property type="entry name" value="Topo_IA"/>
</dbReference>
<dbReference type="InterPro" id="IPR003601">
    <property type="entry name" value="Topo_IA_2"/>
</dbReference>
<dbReference type="InterPro" id="IPR023406">
    <property type="entry name" value="Topo_IA_AS"/>
</dbReference>
<dbReference type="InterPro" id="IPR013497">
    <property type="entry name" value="Topo_IA_cen"/>
</dbReference>
<dbReference type="InterPro" id="IPR013824">
    <property type="entry name" value="Topo_IA_cen_sub1"/>
</dbReference>
<dbReference type="InterPro" id="IPR013825">
    <property type="entry name" value="Topo_IA_cen_sub2"/>
</dbReference>
<dbReference type="InterPro" id="IPR013826">
    <property type="entry name" value="Topo_IA_cen_sub3"/>
</dbReference>
<dbReference type="InterPro" id="IPR023405">
    <property type="entry name" value="Topo_IA_core_domain"/>
</dbReference>
<dbReference type="InterPro" id="IPR003602">
    <property type="entry name" value="Topo_IA_DNA-bd_dom"/>
</dbReference>
<dbReference type="InterPro" id="IPR005733">
    <property type="entry name" value="TopoI_bac-type"/>
</dbReference>
<dbReference type="InterPro" id="IPR013263">
    <property type="entry name" value="TopoI_Znr_bac"/>
</dbReference>
<dbReference type="InterPro" id="IPR028612">
    <property type="entry name" value="Topoisom_1_IA"/>
</dbReference>
<dbReference type="InterPro" id="IPR006171">
    <property type="entry name" value="TOPRIM_dom"/>
</dbReference>
<dbReference type="InterPro" id="IPR034149">
    <property type="entry name" value="TOPRIM_TopoI"/>
</dbReference>
<dbReference type="NCBIfam" id="TIGR01051">
    <property type="entry name" value="topA_bact"/>
    <property type="match status" value="1"/>
</dbReference>
<dbReference type="PANTHER" id="PTHR42785:SF1">
    <property type="entry name" value="DNA TOPOISOMERASE"/>
    <property type="match status" value="1"/>
</dbReference>
<dbReference type="PANTHER" id="PTHR42785">
    <property type="entry name" value="DNA TOPOISOMERASE, TYPE IA, CORE"/>
    <property type="match status" value="1"/>
</dbReference>
<dbReference type="Pfam" id="PF01131">
    <property type="entry name" value="Topoisom_bac"/>
    <property type="match status" value="1"/>
</dbReference>
<dbReference type="Pfam" id="PF01751">
    <property type="entry name" value="Toprim"/>
    <property type="match status" value="1"/>
</dbReference>
<dbReference type="Pfam" id="PF21372">
    <property type="entry name" value="Zn_ribbon_bTOP1"/>
    <property type="match status" value="1"/>
</dbReference>
<dbReference type="Pfam" id="PF08272">
    <property type="entry name" value="Zn_Ribbon_Topo"/>
    <property type="match status" value="2"/>
</dbReference>
<dbReference type="PRINTS" id="PR00417">
    <property type="entry name" value="PRTPISMRASEI"/>
</dbReference>
<dbReference type="SMART" id="SM00437">
    <property type="entry name" value="TOP1Ac"/>
    <property type="match status" value="1"/>
</dbReference>
<dbReference type="SMART" id="SM00436">
    <property type="entry name" value="TOP1Bc"/>
    <property type="match status" value="1"/>
</dbReference>
<dbReference type="SMART" id="SM00493">
    <property type="entry name" value="TOPRIM"/>
    <property type="match status" value="1"/>
</dbReference>
<dbReference type="SUPFAM" id="SSF56712">
    <property type="entry name" value="Prokaryotic type I DNA topoisomerase"/>
    <property type="match status" value="1"/>
</dbReference>
<dbReference type="SUPFAM" id="SSF57783">
    <property type="entry name" value="Zinc beta-ribbon"/>
    <property type="match status" value="2"/>
</dbReference>
<dbReference type="PROSITE" id="PS00396">
    <property type="entry name" value="TOPO_IA_1"/>
    <property type="match status" value="1"/>
</dbReference>
<dbReference type="PROSITE" id="PS52039">
    <property type="entry name" value="TOPO_IA_2"/>
    <property type="match status" value="1"/>
</dbReference>
<dbReference type="PROSITE" id="PS50880">
    <property type="entry name" value="TOPRIM"/>
    <property type="match status" value="1"/>
</dbReference>
<gene>
    <name evidence="1" type="primary">topA</name>
    <name type="ordered locus">BU284</name>
</gene>
<name>TOP1_BUCAI</name>
<reference key="1">
    <citation type="journal article" date="2000" name="Nature">
        <title>Genome sequence of the endocellular bacterial symbiont of aphids Buchnera sp. APS.</title>
        <authorList>
            <person name="Shigenobu S."/>
            <person name="Watanabe H."/>
            <person name="Hattori M."/>
            <person name="Sakaki Y."/>
            <person name="Ishikawa H."/>
        </authorList>
    </citation>
    <scope>NUCLEOTIDE SEQUENCE [LARGE SCALE GENOMIC DNA]</scope>
    <source>
        <strain>APS</strain>
    </source>
</reference>
<accession>P57371</accession>
<sequence length="861" mass="99740">MQKSLVIVESPAKAKTINQYLGSEYIVKSSIGHIRDLTKGKLYNKEKNKKFLNENFIEKTNENKILIKQMGIDPYQNWKFEYHILPGKEKIISELKYIANQVKHIYLATDLDREGEAIAWHLKEVIGGDSSKFSRVVFNEITQHSIQKAFKNVGHINMNRVHAQQARRFMDRIVGYMISPLLWKKIARGLSAGRVQSVAVRIIADRESIIKNFVPEEYWKLDVSLISQDKKKINMDVTHYNNKKFRPINENEVSFAVEKIQKSSCIVKNYEEKISYLKAPAPFITSTLQQSASLRLGFSVKKTMFLAQKLYEEGYITYMRTDSNYLSEYAIKKVRKYIKSNYGSNYLPKEPNIYSNEKHSQEAHEAIRPSDIKIKNIDSDHLNSSAKKLYELIWNQFLASQMKSVKYKSITVTVLADMFKLQKSERIVMFQGWNKVLIEEKNVFSQFPILQTGSQLFINKVTPSQKFTKPPPRFSEASLVRELEKKGIGRPSTYSAITSKIQDRGYVKIKKNKFYAEKMGEILTIRLKKSFSNLIDYNFTAHMEKKLDQVAENKVTWRYLLDDFFKKFSEQLEQAKKSPEEGGMELNNIVPTSLNCPICCKKMGIKTAITGVFLSCLGYNNTDNKKRCKKTINLITLNDFNKEQDNQKKISLQLIQKCDICNMYMDSYFINEKLKLHICANNPSCSGYKFEKGVFKSPIYLSKTIQCEKCYNNMKLKIGPFGKFFTCINKICKNTRKILPNGEISDPKLEPIPFPELLCKQSDAWFVLREGISGIFFAANTFPKSRETRSPFVEELVRFQHLLPEKIYYLSSAPVIDNYGNKTIVCFDKKKKTHYIASKKDGKFTGWSAVFIDQKWCVINK</sequence>
<comment type="function">
    <text evidence="1">Releases the supercoiling and torsional tension of DNA, which is introduced during the DNA replication and transcription, by transiently cleaving and rejoining one strand of the DNA duplex. Introduces a single-strand break via transesterification at a target site in duplex DNA. The scissile phosphodiester is attacked by the catalytic tyrosine of the enzyme, resulting in the formation of a DNA-(5'-phosphotyrosyl)-enzyme intermediate and the expulsion of a 3'-OH DNA strand. The free DNA strand then undergoes passage around the unbroken strand, thus removing DNA supercoils. Finally, in the religation step, the DNA 3'-OH attacks the covalent intermediate to expel the active-site tyrosine and restore the DNA phosphodiester backbone.</text>
</comment>
<comment type="catalytic activity">
    <reaction evidence="1">
        <text>ATP-independent breakage of single-stranded DNA, followed by passage and rejoining.</text>
        <dbReference type="EC" id="5.6.2.1"/>
    </reaction>
</comment>
<comment type="cofactor">
    <cofactor evidence="1">
        <name>Mg(2+)</name>
        <dbReference type="ChEBI" id="CHEBI:18420"/>
    </cofactor>
</comment>
<comment type="subunit">
    <text evidence="1">Monomer.</text>
</comment>
<comment type="similarity">
    <text evidence="1">Belongs to the type IA topoisomerase family.</text>
</comment>
<evidence type="ECO:0000255" key="1">
    <source>
        <dbReference type="HAMAP-Rule" id="MF_00952"/>
    </source>
</evidence>
<evidence type="ECO:0000255" key="2">
    <source>
        <dbReference type="PROSITE-ProRule" id="PRU01383"/>
    </source>
</evidence>
<feature type="chain" id="PRO_0000145144" description="DNA topoisomerase 1">
    <location>
        <begin position="1"/>
        <end position="861"/>
    </location>
</feature>
<feature type="domain" description="Toprim" evidence="1">
    <location>
        <begin position="3"/>
        <end position="141"/>
    </location>
</feature>
<feature type="domain" description="Topo IA-type catalytic" evidence="2">
    <location>
        <begin position="157"/>
        <end position="572"/>
    </location>
</feature>
<feature type="zinc finger region" description="C4-type 1">
    <location>
        <begin position="596"/>
        <end position="628"/>
    </location>
</feature>
<feature type="zinc finger region" description="C4-type 2">
    <location>
        <begin position="658"/>
        <end position="685"/>
    </location>
</feature>
<feature type="zinc finger region" description="C4-type 3">
    <location>
        <begin position="707"/>
        <end position="732"/>
    </location>
</feature>
<feature type="region of interest" description="Interaction with DNA" evidence="1">
    <location>
        <begin position="191"/>
        <end position="196"/>
    </location>
</feature>
<feature type="active site" description="O-(5'-phospho-DNA)-tyrosine intermediate" evidence="2">
    <location>
        <position position="318"/>
    </location>
</feature>
<feature type="binding site" evidence="1">
    <location>
        <position position="9"/>
    </location>
    <ligand>
        <name>Mg(2+)</name>
        <dbReference type="ChEBI" id="CHEBI:18420"/>
        <note>catalytic</note>
    </ligand>
</feature>
<feature type="binding site" evidence="1">
    <location>
        <position position="110"/>
    </location>
    <ligand>
        <name>Mg(2+)</name>
        <dbReference type="ChEBI" id="CHEBI:18420"/>
        <note>catalytic</note>
    </ligand>
</feature>
<feature type="site" description="Interaction with DNA" evidence="1">
    <location>
        <position position="33"/>
    </location>
</feature>
<feature type="site" description="Interaction with DNA" evidence="1">
    <location>
        <position position="167"/>
    </location>
</feature>
<feature type="site" description="Interaction with DNA" evidence="1">
    <location>
        <position position="168"/>
    </location>
</feature>
<feature type="site" description="Interaction with DNA" evidence="1">
    <location>
        <position position="171"/>
    </location>
</feature>
<feature type="site" description="Interaction with DNA" evidence="1">
    <location>
        <position position="176"/>
    </location>
</feature>
<feature type="site" description="Interaction with DNA" evidence="1">
    <location>
        <position position="183"/>
    </location>
</feature>
<feature type="site" description="Interaction with DNA" evidence="1">
    <location>
        <position position="320"/>
    </location>
</feature>
<feature type="site" description="Interaction with DNA" evidence="1">
    <location>
        <position position="504"/>
    </location>
</feature>
<keyword id="KW-0238">DNA-binding</keyword>
<keyword id="KW-0413">Isomerase</keyword>
<keyword id="KW-0460">Magnesium</keyword>
<keyword id="KW-0479">Metal-binding</keyword>
<keyword id="KW-1185">Reference proteome</keyword>
<keyword id="KW-0677">Repeat</keyword>
<keyword id="KW-0799">Topoisomerase</keyword>
<keyword id="KW-0862">Zinc</keyword>
<keyword id="KW-0863">Zinc-finger</keyword>
<protein>
    <recommendedName>
        <fullName evidence="1">DNA topoisomerase 1</fullName>
        <ecNumber evidence="1">5.6.2.1</ecNumber>
    </recommendedName>
    <alternativeName>
        <fullName evidence="1">DNA topoisomerase I</fullName>
    </alternativeName>
    <alternativeName>
        <fullName>Omega-protein</fullName>
    </alternativeName>
    <alternativeName>
        <fullName>Relaxing enzyme</fullName>
    </alternativeName>
    <alternativeName>
        <fullName>Swivelase</fullName>
    </alternativeName>
    <alternativeName>
        <fullName>Untwisting enzyme</fullName>
    </alternativeName>
</protein>
<organism>
    <name type="scientific">Buchnera aphidicola subsp. Acyrthosiphon pisum (strain APS)</name>
    <name type="common">Acyrthosiphon pisum symbiotic bacterium</name>
    <dbReference type="NCBI Taxonomy" id="107806"/>
    <lineage>
        <taxon>Bacteria</taxon>
        <taxon>Pseudomonadati</taxon>
        <taxon>Pseudomonadota</taxon>
        <taxon>Gammaproteobacteria</taxon>
        <taxon>Enterobacterales</taxon>
        <taxon>Erwiniaceae</taxon>
        <taxon>Buchnera</taxon>
    </lineage>
</organism>